<organism>
    <name type="scientific">Homo sapiens</name>
    <name type="common">Human</name>
    <dbReference type="NCBI Taxonomy" id="9606"/>
    <lineage>
        <taxon>Eukaryota</taxon>
        <taxon>Metazoa</taxon>
        <taxon>Chordata</taxon>
        <taxon>Craniata</taxon>
        <taxon>Vertebrata</taxon>
        <taxon>Euteleostomi</taxon>
        <taxon>Mammalia</taxon>
        <taxon>Eutheria</taxon>
        <taxon>Euarchontoglires</taxon>
        <taxon>Primates</taxon>
        <taxon>Haplorrhini</taxon>
        <taxon>Catarrhini</taxon>
        <taxon>Hominidae</taxon>
        <taxon>Homo</taxon>
    </lineage>
</organism>
<gene>
    <name type="primary">STXBP4</name>
</gene>
<dbReference type="EMBL" id="AK122865">
    <property type="protein sequence ID" value="BAC85511.1"/>
    <property type="molecule type" value="mRNA"/>
</dbReference>
<dbReference type="EMBL" id="AC005177">
    <property type="status" value="NOT_ANNOTATED_CDS"/>
    <property type="molecule type" value="Genomic_DNA"/>
</dbReference>
<dbReference type="EMBL" id="AC007485">
    <property type="status" value="NOT_ANNOTATED_CDS"/>
    <property type="molecule type" value="Genomic_DNA"/>
</dbReference>
<dbReference type="EMBL" id="BC041485">
    <property type="protein sequence ID" value="AAH41485.1"/>
    <property type="molecule type" value="mRNA"/>
</dbReference>
<dbReference type="CCDS" id="CCDS11584.2">
    <molecule id="Q6ZWJ1-1"/>
</dbReference>
<dbReference type="RefSeq" id="NP_848604.3">
    <molecule id="Q6ZWJ1-1"/>
    <property type="nucleotide sequence ID" value="NM_178509.6"/>
</dbReference>
<dbReference type="PDB" id="2YSG">
    <property type="method" value="NMR"/>
    <property type="chains" value="A=498-530"/>
</dbReference>
<dbReference type="PDBsum" id="2YSG"/>
<dbReference type="SMR" id="Q6ZWJ1"/>
<dbReference type="BioGRID" id="128947">
    <property type="interactions" value="92"/>
</dbReference>
<dbReference type="FunCoup" id="Q6ZWJ1">
    <property type="interactions" value="1293"/>
</dbReference>
<dbReference type="IntAct" id="Q6ZWJ1">
    <property type="interactions" value="64"/>
</dbReference>
<dbReference type="MINT" id="Q6ZWJ1"/>
<dbReference type="STRING" id="9606.ENSP00000365530"/>
<dbReference type="GlyGen" id="Q6ZWJ1">
    <property type="glycosylation" value="1 site, 1 O-linked glycan (1 site)"/>
</dbReference>
<dbReference type="iPTMnet" id="Q6ZWJ1"/>
<dbReference type="PhosphoSitePlus" id="Q6ZWJ1"/>
<dbReference type="BioMuta" id="STXBP4"/>
<dbReference type="DMDM" id="296452915"/>
<dbReference type="jPOST" id="Q6ZWJ1"/>
<dbReference type="MassIVE" id="Q6ZWJ1"/>
<dbReference type="PaxDb" id="9606-ENSP00000365530"/>
<dbReference type="PeptideAtlas" id="Q6ZWJ1"/>
<dbReference type="ProteomicsDB" id="68487">
    <molecule id="Q6ZWJ1-1"/>
</dbReference>
<dbReference type="ProteomicsDB" id="68488">
    <molecule id="Q6ZWJ1-2"/>
</dbReference>
<dbReference type="Pumba" id="Q6ZWJ1"/>
<dbReference type="Antibodypedia" id="3574">
    <property type="antibodies" value="117 antibodies from 26 providers"/>
</dbReference>
<dbReference type="DNASU" id="252983"/>
<dbReference type="Ensembl" id="ENST00000376352.6">
    <molecule id="Q6ZWJ1-1"/>
    <property type="protein sequence ID" value="ENSP00000365530.2"/>
    <property type="gene ID" value="ENSG00000166263.13"/>
</dbReference>
<dbReference type="Ensembl" id="ENST00000398391.6">
    <molecule id="Q6ZWJ1-2"/>
    <property type="protein sequence ID" value="ENSP00000381427.2"/>
    <property type="gene ID" value="ENSG00000166263.13"/>
</dbReference>
<dbReference type="GeneID" id="252983"/>
<dbReference type="KEGG" id="hsa:252983"/>
<dbReference type="MANE-Select" id="ENST00000376352.6">
    <property type="protein sequence ID" value="ENSP00000365530.2"/>
    <property type="RefSeq nucleotide sequence ID" value="NM_178509.6"/>
    <property type="RefSeq protein sequence ID" value="NP_848604.3"/>
</dbReference>
<dbReference type="UCSC" id="uc002iuf.2">
    <molecule id="Q6ZWJ1-1"/>
    <property type="organism name" value="human"/>
</dbReference>
<dbReference type="AGR" id="HGNC:19694"/>
<dbReference type="CTD" id="252983"/>
<dbReference type="DisGeNET" id="252983"/>
<dbReference type="GeneCards" id="STXBP4"/>
<dbReference type="HGNC" id="HGNC:19694">
    <property type="gene designation" value="STXBP4"/>
</dbReference>
<dbReference type="HPA" id="ENSG00000166263">
    <property type="expression patterns" value="Low tissue specificity"/>
</dbReference>
<dbReference type="MIM" id="610415">
    <property type="type" value="gene"/>
</dbReference>
<dbReference type="neXtProt" id="NX_Q6ZWJ1"/>
<dbReference type="OpenTargets" id="ENSG00000166263"/>
<dbReference type="PharmGKB" id="PA134962267"/>
<dbReference type="VEuPathDB" id="HostDB:ENSG00000166263"/>
<dbReference type="eggNOG" id="KOG1892">
    <property type="taxonomic scope" value="Eukaryota"/>
</dbReference>
<dbReference type="GeneTree" id="ENSGT00390000002226"/>
<dbReference type="InParanoid" id="Q6ZWJ1"/>
<dbReference type="OMA" id="KXEAKAV"/>
<dbReference type="OrthoDB" id="6022242at2759"/>
<dbReference type="PAN-GO" id="Q6ZWJ1">
    <property type="GO annotations" value="4 GO annotations based on evolutionary models"/>
</dbReference>
<dbReference type="PhylomeDB" id="Q6ZWJ1"/>
<dbReference type="TreeFam" id="TF331084"/>
<dbReference type="PathwayCommons" id="Q6ZWJ1"/>
<dbReference type="SignaLink" id="Q6ZWJ1"/>
<dbReference type="SIGNOR" id="Q6ZWJ1"/>
<dbReference type="BioGRID-ORCS" id="252983">
    <property type="hits" value="22 hits in 1167 CRISPR screens"/>
</dbReference>
<dbReference type="ChiTaRS" id="STXBP4">
    <property type="organism name" value="human"/>
</dbReference>
<dbReference type="EvolutionaryTrace" id="Q6ZWJ1"/>
<dbReference type="GenomeRNAi" id="252983"/>
<dbReference type="Pharos" id="Q6ZWJ1">
    <property type="development level" value="Tbio"/>
</dbReference>
<dbReference type="PRO" id="PR:Q6ZWJ1"/>
<dbReference type="Proteomes" id="UP000005640">
    <property type="component" value="Chromosome 17"/>
</dbReference>
<dbReference type="RNAct" id="Q6ZWJ1">
    <property type="molecule type" value="protein"/>
</dbReference>
<dbReference type="Bgee" id="ENSG00000166263">
    <property type="expression patterns" value="Expressed in buccal mucosa cell and 123 other cell types or tissues"/>
</dbReference>
<dbReference type="ExpressionAtlas" id="Q6ZWJ1">
    <property type="expression patterns" value="baseline and differential"/>
</dbReference>
<dbReference type="GO" id="GO:0031410">
    <property type="term" value="C:cytoplasmic vesicle"/>
    <property type="evidence" value="ECO:0000318"/>
    <property type="project" value="GO_Central"/>
</dbReference>
<dbReference type="GO" id="GO:0070062">
    <property type="term" value="C:extracellular exosome"/>
    <property type="evidence" value="ECO:0007005"/>
    <property type="project" value="UniProtKB"/>
</dbReference>
<dbReference type="GO" id="GO:0045335">
    <property type="term" value="C:phagocytic vesicle"/>
    <property type="evidence" value="ECO:0007669"/>
    <property type="project" value="Ensembl"/>
</dbReference>
<dbReference type="GO" id="GO:0019905">
    <property type="term" value="F:syntaxin binding"/>
    <property type="evidence" value="ECO:0000353"/>
    <property type="project" value="UniProtKB"/>
</dbReference>
<dbReference type="GO" id="GO:0071346">
    <property type="term" value="P:cellular response to type II interferon"/>
    <property type="evidence" value="ECO:0007669"/>
    <property type="project" value="Ensembl"/>
</dbReference>
<dbReference type="GO" id="GO:0006974">
    <property type="term" value="P:DNA damage response"/>
    <property type="evidence" value="ECO:0000314"/>
    <property type="project" value="UniProtKB"/>
</dbReference>
<dbReference type="GO" id="GO:0008286">
    <property type="term" value="P:insulin receptor signaling pathway"/>
    <property type="evidence" value="ECO:0000318"/>
    <property type="project" value="GO_Central"/>
</dbReference>
<dbReference type="GO" id="GO:1902808">
    <property type="term" value="P:positive regulation of cell cycle G1/S phase transition"/>
    <property type="evidence" value="ECO:0000315"/>
    <property type="project" value="UniProtKB"/>
</dbReference>
<dbReference type="GO" id="GO:0010838">
    <property type="term" value="P:positive regulation of keratinocyte proliferation"/>
    <property type="evidence" value="ECO:0000315"/>
    <property type="project" value="UniProtKB"/>
</dbReference>
<dbReference type="GO" id="GO:0050821">
    <property type="term" value="P:protein stabilization"/>
    <property type="evidence" value="ECO:0000315"/>
    <property type="project" value="UniProtKB"/>
</dbReference>
<dbReference type="GO" id="GO:0006605">
    <property type="term" value="P:protein targeting"/>
    <property type="evidence" value="ECO:0007669"/>
    <property type="project" value="Ensembl"/>
</dbReference>
<dbReference type="GO" id="GO:0010827">
    <property type="term" value="P:regulation of D-glucose transmembrane transport"/>
    <property type="evidence" value="ECO:0007669"/>
    <property type="project" value="Ensembl"/>
</dbReference>
<dbReference type="GO" id="GO:0061178">
    <property type="term" value="P:regulation of insulin secretion involved in cellular response to glucose stimulus"/>
    <property type="evidence" value="ECO:0000314"/>
    <property type="project" value="UniProtKB"/>
</dbReference>
<dbReference type="CDD" id="cd06698">
    <property type="entry name" value="PDZ1_hSTXBP4-PDZ2_GgSTXBP4-like"/>
    <property type="match status" value="1"/>
</dbReference>
<dbReference type="CDD" id="cd00201">
    <property type="entry name" value="WW"/>
    <property type="match status" value="1"/>
</dbReference>
<dbReference type="FunFam" id="2.20.70.10:FF:000034">
    <property type="entry name" value="syntaxin-binding protein 4 isoform X1"/>
    <property type="match status" value="1"/>
</dbReference>
<dbReference type="FunFam" id="2.30.42.10:FF:000134">
    <property type="entry name" value="syntaxin-binding protein 4 isoform X1"/>
    <property type="match status" value="1"/>
</dbReference>
<dbReference type="Gene3D" id="2.20.70.10">
    <property type="match status" value="1"/>
</dbReference>
<dbReference type="Gene3D" id="2.30.42.10">
    <property type="match status" value="1"/>
</dbReference>
<dbReference type="InterPro" id="IPR001478">
    <property type="entry name" value="PDZ"/>
</dbReference>
<dbReference type="InterPro" id="IPR051342">
    <property type="entry name" value="PDZ_scaffold"/>
</dbReference>
<dbReference type="InterPro" id="IPR036034">
    <property type="entry name" value="PDZ_sf"/>
</dbReference>
<dbReference type="InterPro" id="IPR001202">
    <property type="entry name" value="WW_dom"/>
</dbReference>
<dbReference type="InterPro" id="IPR036020">
    <property type="entry name" value="WW_dom_sf"/>
</dbReference>
<dbReference type="PANTHER" id="PTHR19964">
    <property type="entry name" value="MULTIPLE PDZ DOMAIN PROTEIN"/>
    <property type="match status" value="1"/>
</dbReference>
<dbReference type="PANTHER" id="PTHR19964:SF16">
    <property type="entry name" value="SYNTAXIN-BINDING PROTEIN 4"/>
    <property type="match status" value="1"/>
</dbReference>
<dbReference type="Pfam" id="PF00595">
    <property type="entry name" value="PDZ"/>
    <property type="match status" value="1"/>
</dbReference>
<dbReference type="Pfam" id="PF00397">
    <property type="entry name" value="WW"/>
    <property type="match status" value="1"/>
</dbReference>
<dbReference type="SMART" id="SM00228">
    <property type="entry name" value="PDZ"/>
    <property type="match status" value="1"/>
</dbReference>
<dbReference type="SMART" id="SM00456">
    <property type="entry name" value="WW"/>
    <property type="match status" value="1"/>
</dbReference>
<dbReference type="SUPFAM" id="SSF50156">
    <property type="entry name" value="PDZ domain-like"/>
    <property type="match status" value="1"/>
</dbReference>
<dbReference type="SUPFAM" id="SSF51045">
    <property type="entry name" value="WW domain"/>
    <property type="match status" value="1"/>
</dbReference>
<dbReference type="PROSITE" id="PS50106">
    <property type="entry name" value="PDZ"/>
    <property type="match status" value="1"/>
</dbReference>
<dbReference type="PROSITE" id="PS01159">
    <property type="entry name" value="WW_DOMAIN_1"/>
    <property type="match status" value="1"/>
</dbReference>
<dbReference type="PROSITE" id="PS50020">
    <property type="entry name" value="WW_DOMAIN_2"/>
    <property type="match status" value="1"/>
</dbReference>
<accession>Q6ZWJ1</accession>
<accession>Q8IVZ5</accession>
<proteinExistence type="evidence at protein level"/>
<evidence type="ECO:0000250" key="1"/>
<evidence type="ECO:0000250" key="2">
    <source>
        <dbReference type="UniProtKB" id="Q9WV89"/>
    </source>
</evidence>
<evidence type="ECO:0000255" key="3"/>
<evidence type="ECO:0000255" key="4">
    <source>
        <dbReference type="PROSITE-ProRule" id="PRU00143"/>
    </source>
</evidence>
<evidence type="ECO:0000255" key="5">
    <source>
        <dbReference type="PROSITE-ProRule" id="PRU00224"/>
    </source>
</evidence>
<evidence type="ECO:0000269" key="6">
    <source>
    </source>
</evidence>
<evidence type="ECO:0000303" key="7">
    <source>
    </source>
</evidence>
<evidence type="ECO:0007744" key="8">
    <source>
    </source>
</evidence>
<evidence type="ECO:0007744" key="9">
    <source>
    </source>
</evidence>
<evidence type="ECO:0007829" key="10">
    <source>
        <dbReference type="PDB" id="2YSG"/>
    </source>
</evidence>
<feature type="chain" id="PRO_0000076330" description="Syntaxin-binding protein 4">
    <location>
        <begin position="1"/>
        <end position="553"/>
    </location>
</feature>
<feature type="domain" description="PDZ" evidence="4">
    <location>
        <begin position="19"/>
        <end position="105"/>
    </location>
</feature>
<feature type="domain" description="WW" evidence="5">
    <location>
        <begin position="496"/>
        <end position="529"/>
    </location>
</feature>
<feature type="coiled-coil region" evidence="3">
    <location>
        <begin position="291"/>
        <end position="417"/>
    </location>
</feature>
<feature type="modified residue" description="Phosphoserine" evidence="8 9">
    <location>
        <position position="10"/>
    </location>
</feature>
<feature type="modified residue" description="Phosphoserine" evidence="9">
    <location>
        <position position="12"/>
    </location>
</feature>
<feature type="modified residue" description="Phosphoserine" evidence="2">
    <location>
        <position position="99"/>
    </location>
</feature>
<feature type="modified residue" description="Phosphoserine" evidence="9">
    <location>
        <position position="212"/>
    </location>
</feature>
<feature type="modified residue" description="Phosphoserine" evidence="9">
    <location>
        <position position="463"/>
    </location>
</feature>
<feature type="splice variant" id="VSP_017175" description="In isoform 2." evidence="7">
    <location>
        <begin position="1"/>
        <end position="77"/>
    </location>
</feature>
<feature type="splice variant" id="VSP_017176" description="In isoform 2." evidence="7">
    <original>L</original>
    <variation>LST</variation>
    <location>
        <position position="95"/>
    </location>
</feature>
<feature type="splice variant" id="VSP_017177" description="In isoform 2." evidence="7">
    <original>EKLLE</original>
    <variation>WPGQN</variation>
    <location>
        <begin position="316"/>
        <end position="320"/>
    </location>
</feature>
<feature type="splice variant" id="VSP_017178" description="In isoform 2." evidence="7">
    <location>
        <begin position="321"/>
        <end position="553"/>
    </location>
</feature>
<feature type="sequence variant" id="VAR_063103" description="In dbSNP:rs1156287." evidence="6">
    <original>G</original>
    <variation>R</variation>
    <location>
        <position position="92"/>
    </location>
</feature>
<feature type="sequence variant" id="VAR_056999" description="In dbSNP:rs34870302.">
    <original>C</original>
    <variation>R</variation>
    <location>
        <position position="120"/>
    </location>
</feature>
<feature type="strand" evidence="10">
    <location>
        <begin position="502"/>
        <end position="506"/>
    </location>
</feature>
<feature type="strand" evidence="10">
    <location>
        <begin position="508"/>
        <end position="510"/>
    </location>
</feature>
<feature type="strand" evidence="10">
    <location>
        <begin position="512"/>
        <end position="519"/>
    </location>
</feature>
<reference key="1">
    <citation type="journal article" date="2004" name="Nat. Genet.">
        <title>Complete sequencing and characterization of 21,243 full-length human cDNAs.</title>
        <authorList>
            <person name="Ota T."/>
            <person name="Suzuki Y."/>
            <person name="Nishikawa T."/>
            <person name="Otsuki T."/>
            <person name="Sugiyama T."/>
            <person name="Irie R."/>
            <person name="Wakamatsu A."/>
            <person name="Hayashi K."/>
            <person name="Sato H."/>
            <person name="Nagai K."/>
            <person name="Kimura K."/>
            <person name="Makita H."/>
            <person name="Sekine M."/>
            <person name="Obayashi M."/>
            <person name="Nishi T."/>
            <person name="Shibahara T."/>
            <person name="Tanaka T."/>
            <person name="Ishii S."/>
            <person name="Yamamoto J."/>
            <person name="Saito K."/>
            <person name="Kawai Y."/>
            <person name="Isono Y."/>
            <person name="Nakamura Y."/>
            <person name="Nagahari K."/>
            <person name="Murakami K."/>
            <person name="Yasuda T."/>
            <person name="Iwayanagi T."/>
            <person name="Wagatsuma M."/>
            <person name="Shiratori A."/>
            <person name="Sudo H."/>
            <person name="Hosoiri T."/>
            <person name="Kaku Y."/>
            <person name="Kodaira H."/>
            <person name="Kondo H."/>
            <person name="Sugawara M."/>
            <person name="Takahashi M."/>
            <person name="Kanda K."/>
            <person name="Yokoi T."/>
            <person name="Furuya T."/>
            <person name="Kikkawa E."/>
            <person name="Omura Y."/>
            <person name="Abe K."/>
            <person name="Kamihara K."/>
            <person name="Katsuta N."/>
            <person name="Sato K."/>
            <person name="Tanikawa M."/>
            <person name="Yamazaki M."/>
            <person name="Ninomiya K."/>
            <person name="Ishibashi T."/>
            <person name="Yamashita H."/>
            <person name="Murakawa K."/>
            <person name="Fujimori K."/>
            <person name="Tanai H."/>
            <person name="Kimata M."/>
            <person name="Watanabe M."/>
            <person name="Hiraoka S."/>
            <person name="Chiba Y."/>
            <person name="Ishida S."/>
            <person name="Ono Y."/>
            <person name="Takiguchi S."/>
            <person name="Watanabe S."/>
            <person name="Yosida M."/>
            <person name="Hotuta T."/>
            <person name="Kusano J."/>
            <person name="Kanehori K."/>
            <person name="Takahashi-Fujii A."/>
            <person name="Hara H."/>
            <person name="Tanase T.-O."/>
            <person name="Nomura Y."/>
            <person name="Togiya S."/>
            <person name="Komai F."/>
            <person name="Hara R."/>
            <person name="Takeuchi K."/>
            <person name="Arita M."/>
            <person name="Imose N."/>
            <person name="Musashino K."/>
            <person name="Yuuki H."/>
            <person name="Oshima A."/>
            <person name="Sasaki N."/>
            <person name="Aotsuka S."/>
            <person name="Yoshikawa Y."/>
            <person name="Matsunawa H."/>
            <person name="Ichihara T."/>
            <person name="Shiohata N."/>
            <person name="Sano S."/>
            <person name="Moriya S."/>
            <person name="Momiyama H."/>
            <person name="Satoh N."/>
            <person name="Takami S."/>
            <person name="Terashima Y."/>
            <person name="Suzuki O."/>
            <person name="Nakagawa S."/>
            <person name="Senoh A."/>
            <person name="Mizoguchi H."/>
            <person name="Goto Y."/>
            <person name="Shimizu F."/>
            <person name="Wakebe H."/>
            <person name="Hishigaki H."/>
            <person name="Watanabe T."/>
            <person name="Sugiyama A."/>
            <person name="Takemoto M."/>
            <person name="Kawakami B."/>
            <person name="Yamazaki M."/>
            <person name="Watanabe K."/>
            <person name="Kumagai A."/>
            <person name="Itakura S."/>
            <person name="Fukuzumi Y."/>
            <person name="Fujimori Y."/>
            <person name="Komiyama M."/>
            <person name="Tashiro H."/>
            <person name="Tanigami A."/>
            <person name="Fujiwara T."/>
            <person name="Ono T."/>
            <person name="Yamada K."/>
            <person name="Fujii Y."/>
            <person name="Ozaki K."/>
            <person name="Hirao M."/>
            <person name="Ohmori Y."/>
            <person name="Kawabata A."/>
            <person name="Hikiji T."/>
            <person name="Kobatake N."/>
            <person name="Inagaki H."/>
            <person name="Ikema Y."/>
            <person name="Okamoto S."/>
            <person name="Okitani R."/>
            <person name="Kawakami T."/>
            <person name="Noguchi S."/>
            <person name="Itoh T."/>
            <person name="Shigeta K."/>
            <person name="Senba T."/>
            <person name="Matsumura K."/>
            <person name="Nakajima Y."/>
            <person name="Mizuno T."/>
            <person name="Morinaga M."/>
            <person name="Sasaki M."/>
            <person name="Togashi T."/>
            <person name="Oyama M."/>
            <person name="Hata H."/>
            <person name="Watanabe M."/>
            <person name="Komatsu T."/>
            <person name="Mizushima-Sugano J."/>
            <person name="Satoh T."/>
            <person name="Shirai Y."/>
            <person name="Takahashi Y."/>
            <person name="Nakagawa K."/>
            <person name="Okumura K."/>
            <person name="Nagase T."/>
            <person name="Nomura N."/>
            <person name="Kikuchi H."/>
            <person name="Masuho Y."/>
            <person name="Yamashita R."/>
            <person name="Nakai K."/>
            <person name="Yada T."/>
            <person name="Nakamura Y."/>
            <person name="Ohara O."/>
            <person name="Isogai T."/>
            <person name="Sugano S."/>
        </authorList>
    </citation>
    <scope>NUCLEOTIDE SEQUENCE [LARGE SCALE MRNA] (ISOFORM 1)</scope>
    <scope>VARIANT ARG-92</scope>
    <source>
        <tissue>Tongue</tissue>
    </source>
</reference>
<reference key="2">
    <citation type="journal article" date="2006" name="Nature">
        <title>DNA sequence of human chromosome 17 and analysis of rearrangement in the human lineage.</title>
        <authorList>
            <person name="Zody M.C."/>
            <person name="Garber M."/>
            <person name="Adams D.J."/>
            <person name="Sharpe T."/>
            <person name="Harrow J."/>
            <person name="Lupski J.R."/>
            <person name="Nicholson C."/>
            <person name="Searle S.M."/>
            <person name="Wilming L."/>
            <person name="Young S.K."/>
            <person name="Abouelleil A."/>
            <person name="Allen N.R."/>
            <person name="Bi W."/>
            <person name="Bloom T."/>
            <person name="Borowsky M.L."/>
            <person name="Bugalter B.E."/>
            <person name="Butler J."/>
            <person name="Chang J.L."/>
            <person name="Chen C.-K."/>
            <person name="Cook A."/>
            <person name="Corum B."/>
            <person name="Cuomo C.A."/>
            <person name="de Jong P.J."/>
            <person name="DeCaprio D."/>
            <person name="Dewar K."/>
            <person name="FitzGerald M."/>
            <person name="Gilbert J."/>
            <person name="Gibson R."/>
            <person name="Gnerre S."/>
            <person name="Goldstein S."/>
            <person name="Grafham D.V."/>
            <person name="Grocock R."/>
            <person name="Hafez N."/>
            <person name="Hagopian D.S."/>
            <person name="Hart E."/>
            <person name="Norman C.H."/>
            <person name="Humphray S."/>
            <person name="Jaffe D.B."/>
            <person name="Jones M."/>
            <person name="Kamal M."/>
            <person name="Khodiyar V.K."/>
            <person name="LaButti K."/>
            <person name="Laird G."/>
            <person name="Lehoczky J."/>
            <person name="Liu X."/>
            <person name="Lokyitsang T."/>
            <person name="Loveland J."/>
            <person name="Lui A."/>
            <person name="Macdonald P."/>
            <person name="Major J.E."/>
            <person name="Matthews L."/>
            <person name="Mauceli E."/>
            <person name="McCarroll S.A."/>
            <person name="Mihalev A.H."/>
            <person name="Mudge J."/>
            <person name="Nguyen C."/>
            <person name="Nicol R."/>
            <person name="O'Leary S.B."/>
            <person name="Osoegawa K."/>
            <person name="Schwartz D.C."/>
            <person name="Shaw-Smith C."/>
            <person name="Stankiewicz P."/>
            <person name="Steward C."/>
            <person name="Swarbreck D."/>
            <person name="Venkataraman V."/>
            <person name="Whittaker C.A."/>
            <person name="Yang X."/>
            <person name="Zimmer A.R."/>
            <person name="Bradley A."/>
            <person name="Hubbard T."/>
            <person name="Birren B.W."/>
            <person name="Rogers J."/>
            <person name="Lander E.S."/>
            <person name="Nusbaum C."/>
        </authorList>
    </citation>
    <scope>NUCLEOTIDE SEQUENCE [LARGE SCALE GENOMIC DNA]</scope>
</reference>
<reference key="3">
    <citation type="journal article" date="2004" name="Genome Res.">
        <title>The status, quality, and expansion of the NIH full-length cDNA project: the Mammalian Gene Collection (MGC).</title>
        <authorList>
            <consortium name="The MGC Project Team"/>
        </authorList>
    </citation>
    <scope>NUCLEOTIDE SEQUENCE [LARGE SCALE MRNA] (ISOFORM 2)</scope>
    <source>
        <tissue>Eye</tissue>
    </source>
</reference>
<reference key="4">
    <citation type="journal article" date="2008" name="Mol. Cell">
        <title>Kinase-selective enrichment enables quantitative phosphoproteomics of the kinome across the cell cycle.</title>
        <authorList>
            <person name="Daub H."/>
            <person name="Olsen J.V."/>
            <person name="Bairlein M."/>
            <person name="Gnad F."/>
            <person name="Oppermann F.S."/>
            <person name="Korner R."/>
            <person name="Greff Z."/>
            <person name="Keri G."/>
            <person name="Stemmann O."/>
            <person name="Mann M."/>
        </authorList>
    </citation>
    <scope>IDENTIFICATION BY MASS SPECTROMETRY [LARGE SCALE ANALYSIS]</scope>
    <source>
        <tissue>Cervix carcinoma</tissue>
    </source>
</reference>
<reference key="5">
    <citation type="journal article" date="2008" name="Proc. Natl. Acad. Sci. U.S.A.">
        <title>A quantitative atlas of mitotic phosphorylation.</title>
        <authorList>
            <person name="Dephoure N."/>
            <person name="Zhou C."/>
            <person name="Villen J."/>
            <person name="Beausoleil S.A."/>
            <person name="Bakalarski C.E."/>
            <person name="Elledge S.J."/>
            <person name="Gygi S.P."/>
        </authorList>
    </citation>
    <scope>PHOSPHORYLATION [LARGE SCALE ANALYSIS] AT SER-10</scope>
    <scope>IDENTIFICATION BY MASS SPECTROMETRY [LARGE SCALE ANALYSIS]</scope>
    <source>
        <tissue>Cervix carcinoma</tissue>
    </source>
</reference>
<reference key="6">
    <citation type="journal article" date="2009" name="Anal. Chem.">
        <title>Lys-N and trypsin cover complementary parts of the phosphoproteome in a refined SCX-based approach.</title>
        <authorList>
            <person name="Gauci S."/>
            <person name="Helbig A.O."/>
            <person name="Slijper M."/>
            <person name="Krijgsveld J."/>
            <person name="Heck A.J."/>
            <person name="Mohammed S."/>
        </authorList>
    </citation>
    <scope>IDENTIFICATION BY MASS SPECTROMETRY [LARGE SCALE ANALYSIS]</scope>
</reference>
<reference key="7">
    <citation type="journal article" date="2010" name="Sci. Signal.">
        <title>Quantitative phosphoproteomics reveals widespread full phosphorylation site occupancy during mitosis.</title>
        <authorList>
            <person name="Olsen J.V."/>
            <person name="Vermeulen M."/>
            <person name="Santamaria A."/>
            <person name="Kumar C."/>
            <person name="Miller M.L."/>
            <person name="Jensen L.J."/>
            <person name="Gnad F."/>
            <person name="Cox J."/>
            <person name="Jensen T.S."/>
            <person name="Nigg E.A."/>
            <person name="Brunak S."/>
            <person name="Mann M."/>
        </authorList>
    </citation>
    <scope>IDENTIFICATION BY MASS SPECTROMETRY [LARGE SCALE ANALYSIS]</scope>
    <source>
        <tissue>Cervix carcinoma</tissue>
    </source>
</reference>
<reference key="8">
    <citation type="journal article" date="2011" name="BMC Syst. Biol.">
        <title>Initial characterization of the human central proteome.</title>
        <authorList>
            <person name="Burkard T.R."/>
            <person name="Planyavsky M."/>
            <person name="Kaupe I."/>
            <person name="Breitwieser F.P."/>
            <person name="Buerckstuemmer T."/>
            <person name="Bennett K.L."/>
            <person name="Superti-Furga G."/>
            <person name="Colinge J."/>
        </authorList>
    </citation>
    <scope>IDENTIFICATION BY MASS SPECTROMETRY [LARGE SCALE ANALYSIS]</scope>
</reference>
<reference key="9">
    <citation type="journal article" date="2013" name="J. Proteome Res.">
        <title>Toward a comprehensive characterization of a human cancer cell phosphoproteome.</title>
        <authorList>
            <person name="Zhou H."/>
            <person name="Di Palma S."/>
            <person name="Preisinger C."/>
            <person name="Peng M."/>
            <person name="Polat A.N."/>
            <person name="Heck A.J."/>
            <person name="Mohammed S."/>
        </authorList>
    </citation>
    <scope>PHOSPHORYLATION [LARGE SCALE ANALYSIS] AT SER-10; SER-12; SER-212 AND SER-463</scope>
    <scope>IDENTIFICATION BY MASS SPECTROMETRY [LARGE SCALE ANALYSIS]</scope>
    <source>
        <tissue>Erythroleukemia</tissue>
    </source>
</reference>
<reference key="10">
    <citation type="submission" date="2007-10" db="PDB data bank">
        <title>Solution structure of the WW domain from the human syntaxin-binding protein 4.</title>
        <authorList>
            <consortium name="RIKEN structural genomics initiative (RSGI)"/>
        </authorList>
    </citation>
    <scope>STRUCTURE BY NMR OF 498-530</scope>
</reference>
<protein>
    <recommendedName>
        <fullName>Syntaxin-binding protein 4</fullName>
    </recommendedName>
    <alternativeName>
        <fullName>Syntaxin 4-interacting protein</fullName>
        <shortName>STX4-interacting protein</shortName>
        <shortName>Synip</shortName>
    </alternativeName>
</protein>
<name>STXB4_HUMAN</name>
<keyword id="KW-0002">3D-structure</keyword>
<keyword id="KW-0025">Alternative splicing</keyword>
<keyword id="KW-0175">Coiled coil</keyword>
<keyword id="KW-0963">Cytoplasm</keyword>
<keyword id="KW-0597">Phosphoprotein</keyword>
<keyword id="KW-1267">Proteomics identification</keyword>
<keyword id="KW-1185">Reference proteome</keyword>
<keyword id="KW-0677">Repeat</keyword>
<comment type="function">
    <text evidence="1">Plays a role in the translocation of transport vesicles from the cytoplasm to the plasma membrane. Inhibits the translocation of SLC2A4 from intracellular vesicles to the plasma membrane by STX4A binding and preventing the interaction between STX4A and VAMP2. Stimulation with insulin disrupts the interaction with STX4A, leading to increased levels of SLC2A4 at the plasma membrane. May also play a role in the regulation of insulin release by pancreatic beta cells after stimulation by glucose (By similarity).</text>
</comment>
<comment type="subunit">
    <text evidence="1">Interacts with STX4A.</text>
</comment>
<comment type="subcellular location">
    <subcellularLocation>
        <location evidence="1">Cytoplasm</location>
    </subcellularLocation>
</comment>
<comment type="alternative products">
    <event type="alternative splicing"/>
    <isoform>
        <id>Q6ZWJ1-1</id>
        <name>1</name>
        <sequence type="displayed"/>
    </isoform>
    <isoform>
        <id>Q6ZWJ1-2</id>
        <name>2</name>
        <sequence type="described" ref="VSP_017175 VSP_017176 VSP_017177 VSP_017178"/>
    </isoform>
</comment>
<comment type="PTM">
    <text evidence="1">Phosphorylated on Ser-99 by PKB/AKT2 after insulin treatment. Phosphorylation on Ser-99 abolishes the interaction with STX4A (By similarity).</text>
</comment>
<sequence length="553" mass="61662">MNKNTSTVVSPSLLEKDPAFQMITIAKETGLGLKVLGGINRNEGPLVYIQEIIPGGDCYKDGRLKPGDQLVSVNKESMIGVSFEEAKSIITGAKLRLESAWEIAFIRQKSDNIQPENLSCTSLIEASGEYGPQASTLSLFSSPPEILIPKTSSTPKTNNDILSSCEIKTGYNKTVQIPITSENSTVGLSNTDVASAWTENYGLQEKISLNPSVRFKAEKLEMALNYLGIQPTKEQHQALRQQVQADSKGTVSFGDFVQVARNLFCLQLDEVNVGAHEISNILDSQLLPCDSSEADEMERLKCERDDALKEVNTLKEKLLESDKQRKQLTEELQNVKQEAKAVVEETRALRSRIHLAEAAQRQAHGMEMDYEEVIRLLEAKITELKAQLADYSDQNKESVQDLKKRIMVLDCQLRKSEMARKTFEASTEKLLHFVEAIQEVFSDNSTPLSNLSERRAVLASQTSLTPLGRNGRSIPATLALESKELVKSVRALLDMDCLPYGWEEAYTADGIKYFINHVTQTTSWIHPVMSVLNLSRSEENEEDCSRELPNQKS</sequence>